<comment type="function">
    <text evidence="2">Glycoside hydrolase involved in the hydrolysis of xylan, a major plant cell wall hemicellulose made up of 1,4-beta-linked D-xylopyranose residues. Catalyzes the endohydrolysis of the main-chain 1,4-beta-glycosidic bonds connecting the xylose subunits yielding various xylooligosaccharides and xylose. Produces xylobiose and xylotriose as the main degradation products.</text>
</comment>
<comment type="catalytic activity">
    <reaction evidence="2">
        <text>Endohydrolysis of (1-&gt;4)-beta-D-xylosidic linkages in xylans.</text>
        <dbReference type="EC" id="3.2.1.8"/>
    </reaction>
</comment>
<comment type="pathway">
    <text evidence="4">Glycan degradation; xylan degradation.</text>
</comment>
<comment type="subunit">
    <text evidence="2">Monomer.</text>
</comment>
<comment type="subcellular location">
    <subcellularLocation>
        <location evidence="2">Secreted</location>
    </subcellularLocation>
</comment>
<comment type="PTM">
    <text evidence="2">Not glycosylated.</text>
</comment>
<comment type="similarity">
    <text evidence="4">Belongs to the glycosyl hydrolase 10 (cellulase F) family.</text>
</comment>
<proteinExistence type="inferred from homology"/>
<protein>
    <recommendedName>
        <fullName>Endo-1,4-beta-xylanase 3</fullName>
        <shortName>Xylanase 3</shortName>
        <ecNumber evidence="4">3.2.1.8</ecNumber>
    </recommendedName>
    <alternativeName>
        <fullName>1,4-beta-D-xylan xylanohydrolase 3</fullName>
    </alternativeName>
</protein>
<reference key="1">
    <citation type="journal article" date="2013" name="Ind. Biotechnol.">
        <title>Comparative genomics analysis of Trichoderma reesei strains.</title>
        <authorList>
            <person name="Koike H."/>
            <person name="Aerts A."/>
            <person name="LaButti K."/>
            <person name="Grigoriev I.V."/>
            <person name="Baker S.E."/>
        </authorList>
    </citation>
    <scope>NUCLEOTIDE SEQUENCE [LARGE SCALE GENOMIC DNA]</scope>
    <source>
        <strain>ATCC 56765 / BCRC 32924 / NRRL 11460 / Rut C-30</strain>
    </source>
</reference>
<keyword id="KW-0119">Carbohydrate metabolism</keyword>
<keyword id="KW-1015">Disulfide bond</keyword>
<keyword id="KW-0326">Glycosidase</keyword>
<keyword id="KW-0378">Hydrolase</keyword>
<keyword id="KW-0624">Polysaccharide degradation</keyword>
<keyword id="KW-0873">Pyrrolidone carboxylic acid</keyword>
<keyword id="KW-0964">Secreted</keyword>
<keyword id="KW-0732">Signal</keyword>
<keyword id="KW-0858">Xylan degradation</keyword>
<name>XYN3_HYPJR</name>
<gene>
    <name type="primary">xyn3</name>
    <name type="ORF">M419DRAFT_23616</name>
</gene>
<dbReference type="EC" id="3.2.1.8" evidence="4"/>
<dbReference type="EMBL" id="KI911140">
    <property type="protein sequence ID" value="ETS05245.1"/>
    <property type="molecule type" value="Genomic_DNA"/>
</dbReference>
<dbReference type="SMR" id="A0A024SIB3"/>
<dbReference type="KEGG" id="trr:M419DRAFT_23616"/>
<dbReference type="HOGENOM" id="CLU_020161_2_0_1"/>
<dbReference type="OrthoDB" id="10151at5129"/>
<dbReference type="UniPathway" id="UPA00114"/>
<dbReference type="Proteomes" id="UP000024376">
    <property type="component" value="Unassembled WGS sequence"/>
</dbReference>
<dbReference type="GO" id="GO:0005576">
    <property type="term" value="C:extracellular region"/>
    <property type="evidence" value="ECO:0007669"/>
    <property type="project" value="UniProtKB-SubCell"/>
</dbReference>
<dbReference type="GO" id="GO:0031176">
    <property type="term" value="F:endo-1,4-beta-xylanase activity"/>
    <property type="evidence" value="ECO:0007669"/>
    <property type="project" value="UniProtKB-EC"/>
</dbReference>
<dbReference type="GO" id="GO:0045493">
    <property type="term" value="P:xylan catabolic process"/>
    <property type="evidence" value="ECO:0007669"/>
    <property type="project" value="UniProtKB-UniPathway"/>
</dbReference>
<dbReference type="Gene3D" id="3.20.20.80">
    <property type="entry name" value="Glycosidases"/>
    <property type="match status" value="1"/>
</dbReference>
<dbReference type="InterPro" id="IPR044846">
    <property type="entry name" value="GH10"/>
</dbReference>
<dbReference type="InterPro" id="IPR001000">
    <property type="entry name" value="GH10_dom"/>
</dbReference>
<dbReference type="InterPro" id="IPR017853">
    <property type="entry name" value="Glycoside_hydrolase_SF"/>
</dbReference>
<dbReference type="PANTHER" id="PTHR31490:SF76">
    <property type="entry name" value="ENDO-1,4-BETA-XYLANASE C"/>
    <property type="match status" value="1"/>
</dbReference>
<dbReference type="PANTHER" id="PTHR31490">
    <property type="entry name" value="GLYCOSYL HYDROLASE"/>
    <property type="match status" value="1"/>
</dbReference>
<dbReference type="Pfam" id="PF00331">
    <property type="entry name" value="Glyco_hydro_10"/>
    <property type="match status" value="1"/>
</dbReference>
<dbReference type="PRINTS" id="PR00134">
    <property type="entry name" value="GLHYDRLASE10"/>
</dbReference>
<dbReference type="SMART" id="SM00633">
    <property type="entry name" value="Glyco_10"/>
    <property type="match status" value="1"/>
</dbReference>
<dbReference type="SUPFAM" id="SSF51445">
    <property type="entry name" value="(Trans)glycosidases"/>
    <property type="match status" value="1"/>
</dbReference>
<dbReference type="PROSITE" id="PS51760">
    <property type="entry name" value="GH10_2"/>
    <property type="match status" value="1"/>
</dbReference>
<accession>A0A024SIB3</accession>
<feature type="signal peptide" evidence="3">
    <location>
        <begin position="1"/>
        <end position="16"/>
    </location>
</feature>
<feature type="propeptide" id="PRO_0000436706" evidence="2">
    <location>
        <begin position="17"/>
        <end position="45"/>
    </location>
</feature>
<feature type="chain" id="PRO_5001537149" description="Endo-1,4-beta-xylanase 3" evidence="3">
    <location>
        <begin position="46"/>
        <end position="347"/>
    </location>
</feature>
<feature type="domain" description="GH10" evidence="4">
    <location>
        <begin position="46"/>
        <end position="345"/>
    </location>
</feature>
<feature type="active site" description="Proton donor" evidence="4">
    <location>
        <position position="176"/>
    </location>
</feature>
<feature type="active site" description="Nucleophile" evidence="4">
    <location>
        <position position="282"/>
    </location>
</feature>
<feature type="modified residue" description="Pyrrolidone carboxylic acid" evidence="2">
    <location>
        <position position="46"/>
    </location>
</feature>
<feature type="disulfide bond" evidence="1">
    <location>
        <begin position="300"/>
        <end position="306"/>
    </location>
</feature>
<sequence>MKANVILCLLAPLVAALPTETIHLDPELAALRANLTERTADLWDRQASQSIDQLIKRKGKLYFGTATDRGLLQREKNAAIIQADLGQVTPENSMKWQSLENNQGQLNWGDADYLVNFAQQNGKSIRGHTLIWHSQLPAWVNNINNADTLRQVIRTHVSTVVGRYKGKIRAWDVVNEIFNEDGTLRSSVFSRLLGEEFVSIAFRAARDADPSARLYINDYNLDRANYGKVNGLKTYVSKWISQGVPIDGIGSQSHLSGGGGSGTLGALQQLATVPVTELAITELDIQGAPTTDYTQVVQACLSVSKCVGITVWGISDKDSWRASTNPLLFDANFNPKPAYNSIVGILQ</sequence>
<organism>
    <name type="scientific">Hypocrea jecorina (strain ATCC 56765 / BCRC 32924 / NRRL 11460 / Rut C-30)</name>
    <name type="common">Trichoderma reesei</name>
    <dbReference type="NCBI Taxonomy" id="1344414"/>
    <lineage>
        <taxon>Eukaryota</taxon>
        <taxon>Fungi</taxon>
        <taxon>Dikarya</taxon>
        <taxon>Ascomycota</taxon>
        <taxon>Pezizomycotina</taxon>
        <taxon>Sordariomycetes</taxon>
        <taxon>Hypocreomycetidae</taxon>
        <taxon>Hypocreales</taxon>
        <taxon>Hypocreaceae</taxon>
        <taxon>Trichoderma</taxon>
    </lineage>
</organism>
<evidence type="ECO:0000250" key="1">
    <source>
        <dbReference type="UniProtKB" id="G0RA32"/>
    </source>
</evidence>
<evidence type="ECO:0000250" key="2">
    <source>
        <dbReference type="UniProtKB" id="Q9P973"/>
    </source>
</evidence>
<evidence type="ECO:0000255" key="3"/>
<evidence type="ECO:0000255" key="4">
    <source>
        <dbReference type="PROSITE-ProRule" id="PRU01096"/>
    </source>
</evidence>